<feature type="chain" id="PRO_0000211793" description="Ribosomal RNA small subunit methyltransferase B">
    <location>
        <begin position="1"/>
        <end position="429"/>
    </location>
</feature>
<feature type="active site" description="Nucleophile" evidence="1">
    <location>
        <position position="375"/>
    </location>
</feature>
<feature type="binding site" evidence="1">
    <location>
        <begin position="254"/>
        <end position="260"/>
    </location>
    <ligand>
        <name>S-adenosyl-L-methionine</name>
        <dbReference type="ChEBI" id="CHEBI:59789"/>
    </ligand>
</feature>
<feature type="binding site" evidence="1">
    <location>
        <position position="277"/>
    </location>
    <ligand>
        <name>S-adenosyl-L-methionine</name>
        <dbReference type="ChEBI" id="CHEBI:59789"/>
    </ligand>
</feature>
<feature type="binding site" evidence="1">
    <location>
        <position position="303"/>
    </location>
    <ligand>
        <name>S-adenosyl-L-methionine</name>
        <dbReference type="ChEBI" id="CHEBI:59789"/>
    </ligand>
</feature>
<feature type="binding site" evidence="1">
    <location>
        <position position="322"/>
    </location>
    <ligand>
        <name>S-adenosyl-L-methionine</name>
        <dbReference type="ChEBI" id="CHEBI:59789"/>
    </ligand>
</feature>
<gene>
    <name evidence="1" type="primary">rsmB</name>
    <name type="synonym">rrmB</name>
    <name evidence="1" type="synonym">sun</name>
    <name type="ordered locus">c4049</name>
</gene>
<organism>
    <name type="scientific">Escherichia coli O6:H1 (strain CFT073 / ATCC 700928 / UPEC)</name>
    <dbReference type="NCBI Taxonomy" id="199310"/>
    <lineage>
        <taxon>Bacteria</taxon>
        <taxon>Pseudomonadati</taxon>
        <taxon>Pseudomonadota</taxon>
        <taxon>Gammaproteobacteria</taxon>
        <taxon>Enterobacterales</taxon>
        <taxon>Enterobacteriaceae</taxon>
        <taxon>Escherichia</taxon>
    </lineage>
</organism>
<accession>Q8FD12</accession>
<dbReference type="EC" id="2.1.1.176" evidence="1"/>
<dbReference type="EMBL" id="AE014075">
    <property type="protein sequence ID" value="AAN82487.1"/>
    <property type="molecule type" value="Genomic_DNA"/>
</dbReference>
<dbReference type="RefSeq" id="WP_000744773.1">
    <property type="nucleotide sequence ID" value="NZ_CP051263.1"/>
</dbReference>
<dbReference type="SMR" id="Q8FD12"/>
<dbReference type="STRING" id="199310.c4049"/>
<dbReference type="KEGG" id="ecc:c4049"/>
<dbReference type="eggNOG" id="COG0144">
    <property type="taxonomic scope" value="Bacteria"/>
</dbReference>
<dbReference type="eggNOG" id="COG0781">
    <property type="taxonomic scope" value="Bacteria"/>
</dbReference>
<dbReference type="HOGENOM" id="CLU_005316_0_4_6"/>
<dbReference type="BioCyc" id="ECOL199310:C4049-MONOMER"/>
<dbReference type="Proteomes" id="UP000001410">
    <property type="component" value="Chromosome"/>
</dbReference>
<dbReference type="GO" id="GO:0005829">
    <property type="term" value="C:cytosol"/>
    <property type="evidence" value="ECO:0007669"/>
    <property type="project" value="TreeGrafter"/>
</dbReference>
<dbReference type="GO" id="GO:0003723">
    <property type="term" value="F:RNA binding"/>
    <property type="evidence" value="ECO:0007669"/>
    <property type="project" value="UniProtKB-KW"/>
</dbReference>
<dbReference type="GO" id="GO:0009383">
    <property type="term" value="F:rRNA (cytosine-C5-)-methyltransferase activity"/>
    <property type="evidence" value="ECO:0007669"/>
    <property type="project" value="TreeGrafter"/>
</dbReference>
<dbReference type="GO" id="GO:0006355">
    <property type="term" value="P:regulation of DNA-templated transcription"/>
    <property type="evidence" value="ECO:0007669"/>
    <property type="project" value="InterPro"/>
</dbReference>
<dbReference type="GO" id="GO:0070475">
    <property type="term" value="P:rRNA base methylation"/>
    <property type="evidence" value="ECO:0007669"/>
    <property type="project" value="TreeGrafter"/>
</dbReference>
<dbReference type="CDD" id="cd02440">
    <property type="entry name" value="AdoMet_MTases"/>
    <property type="match status" value="1"/>
</dbReference>
<dbReference type="CDD" id="cd00620">
    <property type="entry name" value="Methyltransferase_Sun"/>
    <property type="match status" value="1"/>
</dbReference>
<dbReference type="FunFam" id="1.10.287.730:FF:000001">
    <property type="entry name" value="Ribosomal RNA small subunit methyltransferase B"/>
    <property type="match status" value="1"/>
</dbReference>
<dbReference type="FunFam" id="1.10.940.10:FF:000002">
    <property type="entry name" value="Ribosomal RNA small subunit methyltransferase B"/>
    <property type="match status" value="1"/>
</dbReference>
<dbReference type="FunFam" id="3.30.70.1170:FF:000002">
    <property type="entry name" value="Ribosomal RNA small subunit methyltransferase B"/>
    <property type="match status" value="1"/>
</dbReference>
<dbReference type="FunFam" id="3.40.50.150:FF:000022">
    <property type="entry name" value="Ribosomal RNA small subunit methyltransferase B"/>
    <property type="match status" value="1"/>
</dbReference>
<dbReference type="Gene3D" id="1.10.287.730">
    <property type="entry name" value="Helix hairpin bin"/>
    <property type="match status" value="1"/>
</dbReference>
<dbReference type="Gene3D" id="1.10.940.10">
    <property type="entry name" value="NusB-like"/>
    <property type="match status" value="1"/>
</dbReference>
<dbReference type="Gene3D" id="3.30.70.1170">
    <property type="entry name" value="Sun protein, domain 3"/>
    <property type="match status" value="1"/>
</dbReference>
<dbReference type="Gene3D" id="3.40.50.150">
    <property type="entry name" value="Vaccinia Virus protein VP39"/>
    <property type="match status" value="1"/>
</dbReference>
<dbReference type="HAMAP" id="MF_01856">
    <property type="entry name" value="16SrRNA_methyltr_B"/>
    <property type="match status" value="1"/>
</dbReference>
<dbReference type="InterPro" id="IPR049560">
    <property type="entry name" value="MeTrfase_RsmB-F_NOP2_cat"/>
</dbReference>
<dbReference type="InterPro" id="IPR001678">
    <property type="entry name" value="MeTrfase_RsmB-F_NOP2_dom"/>
</dbReference>
<dbReference type="InterPro" id="IPR035926">
    <property type="entry name" value="NusB-like_sf"/>
</dbReference>
<dbReference type="InterPro" id="IPR006027">
    <property type="entry name" value="NusB_RsmB_TIM44"/>
</dbReference>
<dbReference type="InterPro" id="IPR023267">
    <property type="entry name" value="RCMT"/>
</dbReference>
<dbReference type="InterPro" id="IPR004573">
    <property type="entry name" value="rRNA_ssu_MeTfrase_B"/>
</dbReference>
<dbReference type="InterPro" id="IPR023541">
    <property type="entry name" value="rRNA_ssu_MeTfrase_B_ent"/>
</dbReference>
<dbReference type="InterPro" id="IPR054728">
    <property type="entry name" value="RsmB-like_ferredoxin"/>
</dbReference>
<dbReference type="InterPro" id="IPR048019">
    <property type="entry name" value="RsmB-like_N"/>
</dbReference>
<dbReference type="InterPro" id="IPR018314">
    <property type="entry name" value="RsmB/NOL1/NOP2-like_CS"/>
</dbReference>
<dbReference type="InterPro" id="IPR029063">
    <property type="entry name" value="SAM-dependent_MTases_sf"/>
</dbReference>
<dbReference type="NCBIfam" id="NF008149">
    <property type="entry name" value="PRK10901.1"/>
    <property type="match status" value="1"/>
</dbReference>
<dbReference type="NCBIfam" id="NF011494">
    <property type="entry name" value="PRK14902.1"/>
    <property type="match status" value="1"/>
</dbReference>
<dbReference type="NCBIfam" id="TIGR00563">
    <property type="entry name" value="rsmB"/>
    <property type="match status" value="1"/>
</dbReference>
<dbReference type="PANTHER" id="PTHR22807:SF61">
    <property type="entry name" value="NOL1_NOP2_SUN FAMILY PROTEIN _ ANTITERMINATION NUSB DOMAIN-CONTAINING PROTEIN"/>
    <property type="match status" value="1"/>
</dbReference>
<dbReference type="PANTHER" id="PTHR22807">
    <property type="entry name" value="NOP2 YEAST -RELATED NOL1/NOP2/FMU SUN DOMAIN-CONTAINING"/>
    <property type="match status" value="1"/>
</dbReference>
<dbReference type="Pfam" id="PF01189">
    <property type="entry name" value="Methyltr_RsmB-F"/>
    <property type="match status" value="1"/>
</dbReference>
<dbReference type="Pfam" id="PF01029">
    <property type="entry name" value="NusB"/>
    <property type="match status" value="1"/>
</dbReference>
<dbReference type="Pfam" id="PF22458">
    <property type="entry name" value="RsmF-B_ferredox"/>
    <property type="match status" value="1"/>
</dbReference>
<dbReference type="PRINTS" id="PR02008">
    <property type="entry name" value="RCMTFAMILY"/>
</dbReference>
<dbReference type="SUPFAM" id="SSF48013">
    <property type="entry name" value="NusB-like"/>
    <property type="match status" value="1"/>
</dbReference>
<dbReference type="SUPFAM" id="SSF53335">
    <property type="entry name" value="S-adenosyl-L-methionine-dependent methyltransferases"/>
    <property type="match status" value="1"/>
</dbReference>
<dbReference type="PROSITE" id="PS01153">
    <property type="entry name" value="NOL1_NOP2_SUN"/>
    <property type="match status" value="1"/>
</dbReference>
<dbReference type="PROSITE" id="PS51686">
    <property type="entry name" value="SAM_MT_RSMB_NOP"/>
    <property type="match status" value="1"/>
</dbReference>
<sequence>MKKQRNLRSMAAQAIEQVVEQGQSLSNILPPLQQKVSDKDKALLQELCFGVLRTLSQSDWLINKLMARPMTGKQRTVHYLIMVGLYQLLYTRIPPHAALAETVEGAVAIKRPQLKGLINGVLRQFQRQQDELLAEFNASDARYLHPSWLLKRLQKAYPEQWQSIVEANNQRPPMWLRVNRTHHSRDSWLALLDEAGMKGFPHADYPDAVQLETPAPVHALPGFEEGWVTVQDASAQGCMTWLAPQNGEHILDLCAAPGGKTTHILEVAPEAQVLAVDIDEQRLSRVYDNLKRLGMKATVKQGDGRYPSQWCGEQQFDRILLDAPCSATGVIRRHPDIKWLRRDRDIPELAQLQSEILDAIWSHLKSGGTLVYATCSVLPEENSLQIKAFLQRTADAELCETGTPEQPGKQNLPGAEEGDGFFYAKLIKK</sequence>
<proteinExistence type="inferred from homology"/>
<protein>
    <recommendedName>
        <fullName evidence="1">Ribosomal RNA small subunit methyltransferase B</fullName>
        <ecNumber evidence="1">2.1.1.176</ecNumber>
    </recommendedName>
    <alternativeName>
        <fullName evidence="1">16S rRNA m5C967 methyltransferase</fullName>
    </alternativeName>
    <alternativeName>
        <fullName evidence="1">rRNA (cytosine-C(5)-)-methyltransferase RsmB</fullName>
    </alternativeName>
</protein>
<comment type="function">
    <text evidence="1">Specifically methylates the cytosine at position 967 (m5C967) of 16S rRNA.</text>
</comment>
<comment type="catalytic activity">
    <reaction evidence="1">
        <text>cytidine(967) in 16S rRNA + S-adenosyl-L-methionine = 5-methylcytidine(967) in 16S rRNA + S-adenosyl-L-homocysteine + H(+)</text>
        <dbReference type="Rhea" id="RHEA:42748"/>
        <dbReference type="Rhea" id="RHEA-COMP:10219"/>
        <dbReference type="Rhea" id="RHEA-COMP:10220"/>
        <dbReference type="ChEBI" id="CHEBI:15378"/>
        <dbReference type="ChEBI" id="CHEBI:57856"/>
        <dbReference type="ChEBI" id="CHEBI:59789"/>
        <dbReference type="ChEBI" id="CHEBI:74483"/>
        <dbReference type="ChEBI" id="CHEBI:82748"/>
        <dbReference type="EC" id="2.1.1.176"/>
    </reaction>
</comment>
<comment type="subcellular location">
    <subcellularLocation>
        <location evidence="1">Cytoplasm</location>
    </subcellularLocation>
</comment>
<comment type="similarity">
    <text evidence="1">Belongs to the class I-like SAM-binding methyltransferase superfamily. RsmB/NOP family.</text>
</comment>
<name>RSMB_ECOL6</name>
<reference key="1">
    <citation type="journal article" date="2002" name="Proc. Natl. Acad. Sci. U.S.A.">
        <title>Extensive mosaic structure revealed by the complete genome sequence of uropathogenic Escherichia coli.</title>
        <authorList>
            <person name="Welch R.A."/>
            <person name="Burland V."/>
            <person name="Plunkett G. III"/>
            <person name="Redford P."/>
            <person name="Roesch P."/>
            <person name="Rasko D."/>
            <person name="Buckles E.L."/>
            <person name="Liou S.-R."/>
            <person name="Boutin A."/>
            <person name="Hackett J."/>
            <person name="Stroud D."/>
            <person name="Mayhew G.F."/>
            <person name="Rose D.J."/>
            <person name="Zhou S."/>
            <person name="Schwartz D.C."/>
            <person name="Perna N.T."/>
            <person name="Mobley H.L.T."/>
            <person name="Donnenberg M.S."/>
            <person name="Blattner F.R."/>
        </authorList>
    </citation>
    <scope>NUCLEOTIDE SEQUENCE [LARGE SCALE GENOMIC DNA]</scope>
    <source>
        <strain>CFT073 / ATCC 700928 / UPEC</strain>
    </source>
</reference>
<evidence type="ECO:0000255" key="1">
    <source>
        <dbReference type="HAMAP-Rule" id="MF_01856"/>
    </source>
</evidence>
<keyword id="KW-0963">Cytoplasm</keyword>
<keyword id="KW-0489">Methyltransferase</keyword>
<keyword id="KW-1185">Reference proteome</keyword>
<keyword id="KW-0694">RNA-binding</keyword>
<keyword id="KW-0698">rRNA processing</keyword>
<keyword id="KW-0949">S-adenosyl-L-methionine</keyword>
<keyword id="KW-0808">Transferase</keyword>